<protein>
    <recommendedName>
        <fullName evidence="7">Peroxisome assembly protein 10-B</fullName>
        <ecNumber evidence="2">2.3.2.27</ecNumber>
    </recommendedName>
    <alternativeName>
        <fullName evidence="7">Peroxin-10-B</fullName>
    </alternativeName>
</protein>
<proteinExistence type="inferred from homology"/>
<name>PX10B_XENLA</name>
<organism>
    <name type="scientific">Xenopus laevis</name>
    <name type="common">African clawed frog</name>
    <dbReference type="NCBI Taxonomy" id="8355"/>
    <lineage>
        <taxon>Eukaryota</taxon>
        <taxon>Metazoa</taxon>
        <taxon>Chordata</taxon>
        <taxon>Craniata</taxon>
        <taxon>Vertebrata</taxon>
        <taxon>Euteleostomi</taxon>
        <taxon>Amphibia</taxon>
        <taxon>Batrachia</taxon>
        <taxon>Anura</taxon>
        <taxon>Pipoidea</taxon>
        <taxon>Pipidae</taxon>
        <taxon>Xenopodinae</taxon>
        <taxon>Xenopus</taxon>
        <taxon>Xenopus</taxon>
    </lineage>
</organism>
<evidence type="ECO:0000250" key="1">
    <source>
        <dbReference type="UniProtKB" id="G2Q0E2"/>
    </source>
</evidence>
<evidence type="ECO:0000250" key="2">
    <source>
        <dbReference type="UniProtKB" id="O60683"/>
    </source>
</evidence>
<evidence type="ECO:0000250" key="3">
    <source>
        <dbReference type="UniProtKB" id="Q05568"/>
    </source>
</evidence>
<evidence type="ECO:0000255" key="4"/>
<evidence type="ECO:0000255" key="5">
    <source>
        <dbReference type="PROSITE-ProRule" id="PRU00175"/>
    </source>
</evidence>
<evidence type="ECO:0000269" key="6">
    <source>
    </source>
</evidence>
<evidence type="ECO:0000305" key="7"/>
<evidence type="ECO:0000312" key="8">
    <source>
        <dbReference type="Xenbase" id="XB-GENE-17344798"/>
    </source>
</evidence>
<keyword id="KW-0472">Membrane</keyword>
<keyword id="KW-0479">Metal-binding</keyword>
<keyword id="KW-0576">Peroxisome</keyword>
<keyword id="KW-0962">Peroxisome biogenesis</keyword>
<keyword id="KW-0653">Protein transport</keyword>
<keyword id="KW-1185">Reference proteome</keyword>
<keyword id="KW-0808">Transferase</keyword>
<keyword id="KW-0812">Transmembrane</keyword>
<keyword id="KW-1133">Transmembrane helix</keyword>
<keyword id="KW-0813">Transport</keyword>
<keyword id="KW-0833">Ubl conjugation pathway</keyword>
<keyword id="KW-0862">Zinc</keyword>
<keyword id="KW-0863">Zinc-finger</keyword>
<accession>A0A1L8FM16</accession>
<feature type="chain" id="PRO_0000456987" description="Peroxisome assembly protein 10-B">
    <location>
        <begin position="1"/>
        <end position="326"/>
    </location>
</feature>
<feature type="topological domain" description="Peroxisomal matrix" evidence="1">
    <location>
        <begin position="1"/>
        <end position="7"/>
    </location>
</feature>
<feature type="transmembrane region" description="Helical; Name=TM1" evidence="1">
    <location>
        <begin position="8"/>
        <end position="37"/>
    </location>
</feature>
<feature type="topological domain" description="Cytoplasmic" evidence="1">
    <location>
        <position position="38"/>
    </location>
</feature>
<feature type="transmembrane region" description="Helical; Name=TM2" evidence="1">
    <location>
        <begin position="39"/>
        <end position="60"/>
    </location>
</feature>
<feature type="topological domain" description="Peroxisomal matrix" evidence="1">
    <location>
        <begin position="61"/>
        <end position="89"/>
    </location>
</feature>
<feature type="transmembrane region" description="Helical; Name=TM3" evidence="1">
    <location>
        <begin position="90"/>
        <end position="122"/>
    </location>
</feature>
<feature type="topological domain" description="Cytoplasmic" evidence="1">
    <location>
        <begin position="123"/>
        <end position="147"/>
    </location>
</feature>
<feature type="transmembrane region" description="Helical; Name=TM4" evidence="1">
    <location>
        <begin position="148"/>
        <end position="185"/>
    </location>
</feature>
<feature type="topological domain" description="Peroxisomal matrix" evidence="1">
    <location>
        <begin position="186"/>
        <end position="216"/>
    </location>
</feature>
<feature type="transmembrane region" description="Helical; Name=TM5" evidence="1">
    <location>
        <begin position="217"/>
        <end position="236"/>
    </location>
</feature>
<feature type="topological domain" description="Cytoplasmic" evidence="1">
    <location>
        <begin position="237"/>
        <end position="326"/>
    </location>
</feature>
<feature type="zinc finger region" description="RING-type" evidence="5">
    <location>
        <begin position="273"/>
        <end position="311"/>
    </location>
</feature>
<feature type="binding site" evidence="1">
    <location>
        <position position="273"/>
    </location>
    <ligand>
        <name>Zn(2+)</name>
        <dbReference type="ChEBI" id="CHEBI:29105"/>
        <label>1</label>
    </ligand>
</feature>
<feature type="binding site" evidence="1">
    <location>
        <position position="276"/>
    </location>
    <ligand>
        <name>Zn(2+)</name>
        <dbReference type="ChEBI" id="CHEBI:29105"/>
        <label>1</label>
    </ligand>
</feature>
<feature type="binding site" evidence="1">
    <location>
        <position position="288"/>
    </location>
    <ligand>
        <name>Zn(2+)</name>
        <dbReference type="ChEBI" id="CHEBI:29105"/>
        <label>2</label>
    </ligand>
</feature>
<feature type="binding site" evidence="1">
    <location>
        <position position="290"/>
    </location>
    <ligand>
        <name>Zn(2+)</name>
        <dbReference type="ChEBI" id="CHEBI:29105"/>
        <label>2</label>
    </ligand>
</feature>
<feature type="binding site" evidence="1">
    <location>
        <position position="293"/>
    </location>
    <ligand>
        <name>Zn(2+)</name>
        <dbReference type="ChEBI" id="CHEBI:29105"/>
        <label>1</label>
    </ligand>
</feature>
<feature type="binding site" evidence="1">
    <location>
        <position position="296"/>
    </location>
    <ligand>
        <name>Zn(2+)</name>
        <dbReference type="ChEBI" id="CHEBI:29105"/>
        <label>1</label>
    </ligand>
</feature>
<feature type="binding site" evidence="1">
    <location>
        <position position="307"/>
    </location>
    <ligand>
        <name>Zn(2+)</name>
        <dbReference type="ChEBI" id="CHEBI:29105"/>
        <label>2</label>
    </ligand>
</feature>
<feature type="binding site" evidence="1">
    <location>
        <position position="310"/>
    </location>
    <ligand>
        <name>Zn(2+)</name>
        <dbReference type="ChEBI" id="CHEBI:29105"/>
        <label>2</label>
    </ligand>
</feature>
<comment type="function">
    <text evidence="2 3 6">E3 ubiquitin-protein ligase component of a retrotranslocation channel required for peroxisome organization by mediating export of the PEX5 receptor from peroxisomes to the cytosol, thereby promoting PEX5 recycling (PubMed:35931083). The retrotranslocation channel is composed of PEX2, PEX10 and PEX12; each subunit contributing transmembrane segments that coassemble into an open channel that specifically allows the passage of PEX5 through the peroxisomal membrane (By similarity). PEX10 also regulates PEX5 recycling by acting as a E3 ubiquitin-protein ligase (By similarity). When PEX5 recycling is compromised, PEX10 catalyzes polyubiquitination of PEX5 during its passage through the retrotranslocation channel, leading to its degradation (By similarity).</text>
</comment>
<comment type="catalytic activity">
    <reaction evidence="2">
        <text>S-ubiquitinyl-[E2 ubiquitin-conjugating enzyme]-L-cysteine + [acceptor protein]-L-lysine = [E2 ubiquitin-conjugating enzyme]-L-cysteine + N(6)-ubiquitinyl-[acceptor protein]-L-lysine.</text>
        <dbReference type="EC" id="2.3.2.27"/>
    </reaction>
</comment>
<comment type="activity regulation">
    <text evidence="2">The E3 ubiquitin-protein ligase activity is stimulated by PEX12.</text>
</comment>
<comment type="pathway">
    <text evidence="2">Protein modification; protein ubiquitination.</text>
</comment>
<comment type="subunit">
    <text evidence="2">Component of the PEX2-PEX10-PEX12 retrotranslocation channel.</text>
</comment>
<comment type="subcellular location">
    <subcellularLocation>
        <location evidence="2">Peroxisome membrane</location>
        <topology evidence="4">Multi-pass membrane protein</topology>
    </subcellularLocation>
</comment>
<comment type="domain">
    <text evidence="1">The three subunits of the retrotranslocation channel (PEX2, PEX10 and PEX12) coassemble in the membrane into a channel with an open 10 Angstrom pore. The RING-type zinc-fingers that catalyze PEX5 receptor ubiquitination are positioned above the pore on the cytosolic side of the complex.</text>
</comment>
<comment type="similarity">
    <text evidence="7">Belongs to the pex2/pex10/pex12 family.</text>
</comment>
<gene>
    <name evidence="8" type="primary">pex10.L</name>
</gene>
<sequence>MAFSSANRPQLIRSSQKDEQFQGSLRGQAHEVCQAFAGAKKWLQWRKEIELFSDLAYYCLTTFSGYQTLGEEYVNIVQVDSSKRKVPTLFQRAALICCHTLLPYFLDKELVRLEHELQIETDGVRLSHSGLSSGSHRRSWMWKWVHRKIAALSEQQKKTLVKAVYIFRQSIAFLRRLHLATFYIKGAFYHLAKRFTGINYLRVRRSIGDDQLVNRSYTLLGAISLLHLMLLLWVQFNSFQQRQEAQQKWKVLRRMSYQRAPPHEKSYKRRAKCTLCLEVRRHCTATPCGHLFCWECITEWCNTKVECPLCREKFSAQKLVYLRHYR</sequence>
<reference key="1">
    <citation type="journal article" date="2016" name="Nature">
        <title>Genome evolution in the allotetraploid frog Xenopus laevis.</title>
        <authorList>
            <person name="Session A.M."/>
            <person name="Uno Y."/>
            <person name="Kwon T."/>
            <person name="Chapman J.A."/>
            <person name="Toyoda A."/>
            <person name="Takahashi S."/>
            <person name="Fukui A."/>
            <person name="Hikosaka A."/>
            <person name="Suzuki A."/>
            <person name="Kondo M."/>
            <person name="van Heeringen S.J."/>
            <person name="Quigley I."/>
            <person name="Heinz S."/>
            <person name="Ogino H."/>
            <person name="Ochi H."/>
            <person name="Hellsten U."/>
            <person name="Lyons J.B."/>
            <person name="Simakov O."/>
            <person name="Putnam N."/>
            <person name="Stites J."/>
            <person name="Kuroki Y."/>
            <person name="Tanaka T."/>
            <person name="Michiue T."/>
            <person name="Watanabe M."/>
            <person name="Bogdanovic O."/>
            <person name="Lister R."/>
            <person name="Georgiou G."/>
            <person name="Paranjpe S.S."/>
            <person name="van Kruijsbergen I."/>
            <person name="Shu S."/>
            <person name="Carlson J."/>
            <person name="Kinoshita T."/>
            <person name="Ohta Y."/>
            <person name="Mawaribuchi S."/>
            <person name="Jenkins J."/>
            <person name="Grimwood J."/>
            <person name="Schmutz J."/>
            <person name="Mitros T."/>
            <person name="Mozaffari S.V."/>
            <person name="Suzuki Y."/>
            <person name="Haramoto Y."/>
            <person name="Yamamoto T.S."/>
            <person name="Takagi C."/>
            <person name="Heald R."/>
            <person name="Miller K."/>
            <person name="Haudenschild C."/>
            <person name="Kitzman J."/>
            <person name="Nakayama T."/>
            <person name="Izutsu Y."/>
            <person name="Robert J."/>
            <person name="Fortriede J."/>
            <person name="Burns K."/>
            <person name="Lotay V."/>
            <person name="Karimi K."/>
            <person name="Yasuoka Y."/>
            <person name="Dichmann D.S."/>
            <person name="Flajnik M.F."/>
            <person name="Houston D.W."/>
            <person name="Shendure J."/>
            <person name="DuPasquier L."/>
            <person name="Vize P.D."/>
            <person name="Zorn A.M."/>
            <person name="Ito M."/>
            <person name="Marcotte E.M."/>
            <person name="Wallingford J.B."/>
            <person name="Ito Y."/>
            <person name="Asashima M."/>
            <person name="Ueno N."/>
            <person name="Matsuda Y."/>
            <person name="Veenstra G.J."/>
            <person name="Fujiyama A."/>
            <person name="Harland R.M."/>
            <person name="Taira M."/>
            <person name="Rokhsar D.S."/>
        </authorList>
    </citation>
    <scope>NUCLEOTIDE SEQUENCE [LARGE SCALE GENOMIC DNA]</scope>
    <source>
        <strain>J</strain>
    </source>
</reference>
<reference key="2">
    <citation type="journal article" date="2022" name="Mol. Cell">
        <title>PEX5 translocation into and out of peroxisomes drives matrix protein import.</title>
        <authorList>
            <person name="Skowyra M.L."/>
            <person name="Rapoport T.A."/>
        </authorList>
    </citation>
    <scope>FUNCTION</scope>
</reference>
<dbReference type="EC" id="2.3.2.27" evidence="2"/>
<dbReference type="RefSeq" id="XP_018081490.1">
    <property type="nucleotide sequence ID" value="XM_018226001.2"/>
</dbReference>
<dbReference type="SMR" id="A0A1L8FM16"/>
<dbReference type="STRING" id="8355.A0A1L8FM16"/>
<dbReference type="PaxDb" id="8355-A0A1L8FM16"/>
<dbReference type="GeneID" id="108696540"/>
<dbReference type="KEGG" id="xla:108696540"/>
<dbReference type="AGR" id="Xenbase:XB-GENE-17344798"/>
<dbReference type="CTD" id="108696540"/>
<dbReference type="Xenbase" id="XB-GENE-17344798">
    <property type="gene designation" value="pex10.L"/>
</dbReference>
<dbReference type="OMA" id="YCDVVQL"/>
<dbReference type="OrthoDB" id="6270329at2759"/>
<dbReference type="UniPathway" id="UPA00143"/>
<dbReference type="Proteomes" id="UP000186698">
    <property type="component" value="Chromosome 7L"/>
</dbReference>
<dbReference type="Bgee" id="108696540">
    <property type="expression patterns" value="Expressed in blastula and 19 other cell types or tissues"/>
</dbReference>
<dbReference type="GO" id="GO:0005778">
    <property type="term" value="C:peroxisomal membrane"/>
    <property type="evidence" value="ECO:0000318"/>
    <property type="project" value="GO_Central"/>
</dbReference>
<dbReference type="GO" id="GO:0016740">
    <property type="term" value="F:transferase activity"/>
    <property type="evidence" value="ECO:0007669"/>
    <property type="project" value="UniProtKB-KW"/>
</dbReference>
<dbReference type="GO" id="GO:0008270">
    <property type="term" value="F:zinc ion binding"/>
    <property type="evidence" value="ECO:0007669"/>
    <property type="project" value="UniProtKB-KW"/>
</dbReference>
<dbReference type="GO" id="GO:0016558">
    <property type="term" value="P:protein import into peroxisome matrix"/>
    <property type="evidence" value="ECO:0000318"/>
    <property type="project" value="GO_Central"/>
</dbReference>
<dbReference type="GO" id="GO:0016567">
    <property type="term" value="P:protein ubiquitination"/>
    <property type="evidence" value="ECO:0007669"/>
    <property type="project" value="UniProtKB-UniPathway"/>
</dbReference>
<dbReference type="CDD" id="cd16527">
    <property type="entry name" value="RING-HC_PEX10"/>
    <property type="match status" value="1"/>
</dbReference>
<dbReference type="FunFam" id="3.30.40.10:FF:000332">
    <property type="entry name" value="Peroxisome biogenesis factor 10"/>
    <property type="match status" value="1"/>
</dbReference>
<dbReference type="Gene3D" id="3.30.40.10">
    <property type="entry name" value="Zinc/RING finger domain, C3HC4 (zinc finger)"/>
    <property type="match status" value="1"/>
</dbReference>
<dbReference type="InterPro" id="IPR025654">
    <property type="entry name" value="PEX2/10"/>
</dbReference>
<dbReference type="InterPro" id="IPR006845">
    <property type="entry name" value="Pex_N"/>
</dbReference>
<dbReference type="InterPro" id="IPR001841">
    <property type="entry name" value="Znf_RING"/>
</dbReference>
<dbReference type="InterPro" id="IPR013083">
    <property type="entry name" value="Znf_RING/FYVE/PHD"/>
</dbReference>
<dbReference type="InterPro" id="IPR017907">
    <property type="entry name" value="Znf_RING_CS"/>
</dbReference>
<dbReference type="PANTHER" id="PTHR23350">
    <property type="entry name" value="PEROXISOME ASSEMBLY PROTEIN 10"/>
    <property type="match status" value="1"/>
</dbReference>
<dbReference type="PANTHER" id="PTHR23350:SF0">
    <property type="entry name" value="PEROXISOME BIOGENESIS FACTOR 10"/>
    <property type="match status" value="1"/>
</dbReference>
<dbReference type="Pfam" id="PF04757">
    <property type="entry name" value="Pex2_Pex12"/>
    <property type="match status" value="1"/>
</dbReference>
<dbReference type="Pfam" id="PF13639">
    <property type="entry name" value="zf-RING_2"/>
    <property type="match status" value="1"/>
</dbReference>
<dbReference type="SMART" id="SM00184">
    <property type="entry name" value="RING"/>
    <property type="match status" value="1"/>
</dbReference>
<dbReference type="SUPFAM" id="SSF57850">
    <property type="entry name" value="RING/U-box"/>
    <property type="match status" value="1"/>
</dbReference>
<dbReference type="PROSITE" id="PS00518">
    <property type="entry name" value="ZF_RING_1"/>
    <property type="match status" value="1"/>
</dbReference>
<dbReference type="PROSITE" id="PS50089">
    <property type="entry name" value="ZF_RING_2"/>
    <property type="match status" value="1"/>
</dbReference>